<name>Y7140_DICDI</name>
<organism>
    <name type="scientific">Dictyostelium discoideum</name>
    <name type="common">Social amoeba</name>
    <dbReference type="NCBI Taxonomy" id="44689"/>
    <lineage>
        <taxon>Eukaryota</taxon>
        <taxon>Amoebozoa</taxon>
        <taxon>Evosea</taxon>
        <taxon>Eumycetozoa</taxon>
        <taxon>Dictyostelia</taxon>
        <taxon>Dictyosteliales</taxon>
        <taxon>Dictyosteliaceae</taxon>
        <taxon>Dictyostelium</taxon>
    </lineage>
</organism>
<protein>
    <recommendedName>
        <fullName>Putative uncharacterized protein DDB_G0286769</fullName>
    </recommendedName>
</protein>
<gene>
    <name type="ORF">DDB_G0286769</name>
</gene>
<reference key="1">
    <citation type="journal article" date="2005" name="Nature">
        <title>The genome of the social amoeba Dictyostelium discoideum.</title>
        <authorList>
            <person name="Eichinger L."/>
            <person name="Pachebat J.A."/>
            <person name="Gloeckner G."/>
            <person name="Rajandream M.A."/>
            <person name="Sucgang R."/>
            <person name="Berriman M."/>
            <person name="Song J."/>
            <person name="Olsen R."/>
            <person name="Szafranski K."/>
            <person name="Xu Q."/>
            <person name="Tunggal B."/>
            <person name="Kummerfeld S."/>
            <person name="Madera M."/>
            <person name="Konfortov B.A."/>
            <person name="Rivero F."/>
            <person name="Bankier A.T."/>
            <person name="Lehmann R."/>
            <person name="Hamlin N."/>
            <person name="Davies R."/>
            <person name="Gaudet P."/>
            <person name="Fey P."/>
            <person name="Pilcher K."/>
            <person name="Chen G."/>
            <person name="Saunders D."/>
            <person name="Sodergren E.J."/>
            <person name="Davis P."/>
            <person name="Kerhornou A."/>
            <person name="Nie X."/>
            <person name="Hall N."/>
            <person name="Anjard C."/>
            <person name="Hemphill L."/>
            <person name="Bason N."/>
            <person name="Farbrother P."/>
            <person name="Desany B."/>
            <person name="Just E."/>
            <person name="Morio T."/>
            <person name="Rost R."/>
            <person name="Churcher C.M."/>
            <person name="Cooper J."/>
            <person name="Haydock S."/>
            <person name="van Driessche N."/>
            <person name="Cronin A."/>
            <person name="Goodhead I."/>
            <person name="Muzny D.M."/>
            <person name="Mourier T."/>
            <person name="Pain A."/>
            <person name="Lu M."/>
            <person name="Harper D."/>
            <person name="Lindsay R."/>
            <person name="Hauser H."/>
            <person name="James K.D."/>
            <person name="Quiles M."/>
            <person name="Madan Babu M."/>
            <person name="Saito T."/>
            <person name="Buchrieser C."/>
            <person name="Wardroper A."/>
            <person name="Felder M."/>
            <person name="Thangavelu M."/>
            <person name="Johnson D."/>
            <person name="Knights A."/>
            <person name="Loulseged H."/>
            <person name="Mungall K.L."/>
            <person name="Oliver K."/>
            <person name="Price C."/>
            <person name="Quail M.A."/>
            <person name="Urushihara H."/>
            <person name="Hernandez J."/>
            <person name="Rabbinowitsch E."/>
            <person name="Steffen D."/>
            <person name="Sanders M."/>
            <person name="Ma J."/>
            <person name="Kohara Y."/>
            <person name="Sharp S."/>
            <person name="Simmonds M.N."/>
            <person name="Spiegler S."/>
            <person name="Tivey A."/>
            <person name="Sugano S."/>
            <person name="White B."/>
            <person name="Walker D."/>
            <person name="Woodward J.R."/>
            <person name="Winckler T."/>
            <person name="Tanaka Y."/>
            <person name="Shaulsky G."/>
            <person name="Schleicher M."/>
            <person name="Weinstock G.M."/>
            <person name="Rosenthal A."/>
            <person name="Cox E.C."/>
            <person name="Chisholm R.L."/>
            <person name="Gibbs R.A."/>
            <person name="Loomis W.F."/>
            <person name="Platzer M."/>
            <person name="Kay R.R."/>
            <person name="Williams J.G."/>
            <person name="Dear P.H."/>
            <person name="Noegel A.A."/>
            <person name="Barrell B.G."/>
            <person name="Kuspa A."/>
        </authorList>
    </citation>
    <scope>NUCLEOTIDE SEQUENCE [LARGE SCALE GENOMIC DNA]</scope>
    <source>
        <strain>AX4</strain>
    </source>
</reference>
<proteinExistence type="predicted"/>
<dbReference type="EMBL" id="AAFI02000089">
    <property type="protein sequence ID" value="EAL64140.1"/>
    <property type="molecule type" value="Genomic_DNA"/>
</dbReference>
<dbReference type="RefSeq" id="XP_637669.1">
    <property type="nucleotide sequence ID" value="XM_632577.1"/>
</dbReference>
<dbReference type="SMR" id="Q54L92"/>
<dbReference type="PaxDb" id="44689-DDB0187140"/>
<dbReference type="EnsemblProtists" id="EAL64140">
    <property type="protein sequence ID" value="EAL64140"/>
    <property type="gene ID" value="DDB_G0286769"/>
</dbReference>
<dbReference type="GeneID" id="8625809"/>
<dbReference type="KEGG" id="ddi:DDB_G0286769"/>
<dbReference type="dictyBase" id="DDB_G0286769"/>
<dbReference type="VEuPathDB" id="AmoebaDB:DDB_G0286769"/>
<dbReference type="HOGENOM" id="CLU_2201990_0_0_1"/>
<dbReference type="InParanoid" id="Q54L92"/>
<dbReference type="PRO" id="PR:Q54L92"/>
<dbReference type="Proteomes" id="UP000002195">
    <property type="component" value="Chromosome 4"/>
</dbReference>
<accession>Q54L92</accession>
<evidence type="ECO:0000256" key="1">
    <source>
        <dbReference type="SAM" id="MobiDB-lite"/>
    </source>
</evidence>
<keyword id="KW-1185">Reference proteome</keyword>
<sequence length="108" mass="12905">MSNQQKQLQLPSASIKKPKEKQKSQIVRIIQSKFKDYQYMFLLIKLSTYSKFDQDDDFNTFLSFLESEYKFSKQLSSKEIVLSLRYTKNTKITPYINHSKFETEKKIS</sequence>
<feature type="chain" id="PRO_0000347052" description="Putative uncharacterized protein DDB_G0286769">
    <location>
        <begin position="1"/>
        <end position="108"/>
    </location>
</feature>
<feature type="region of interest" description="Disordered" evidence="1">
    <location>
        <begin position="1"/>
        <end position="22"/>
    </location>
</feature>
<feature type="compositionally biased region" description="Polar residues" evidence="1">
    <location>
        <begin position="1"/>
        <end position="12"/>
    </location>
</feature>